<accession>Q87VY5</accession>
<evidence type="ECO:0000255" key="1">
    <source>
        <dbReference type="HAMAP-Rule" id="MF_00375"/>
    </source>
</evidence>
<proteinExistence type="inferred from homology"/>
<organism>
    <name type="scientific">Pseudomonas syringae pv. tomato (strain ATCC BAA-871 / DC3000)</name>
    <dbReference type="NCBI Taxonomy" id="223283"/>
    <lineage>
        <taxon>Bacteria</taxon>
        <taxon>Pseudomonadati</taxon>
        <taxon>Pseudomonadota</taxon>
        <taxon>Gammaproteobacteria</taxon>
        <taxon>Pseudomonadales</taxon>
        <taxon>Pseudomonadaceae</taxon>
        <taxon>Pseudomonas</taxon>
    </lineage>
</organism>
<keyword id="KW-0963">Cytoplasm</keyword>
<keyword id="KW-0413">Isomerase</keyword>
<keyword id="KW-0627">Porphyrin biosynthesis</keyword>
<keyword id="KW-0663">Pyridoxal phosphate</keyword>
<keyword id="KW-1185">Reference proteome</keyword>
<sequence length="427" mass="45378">MSRSETLFANAQKHIPGGVNSPVRAFKSVGGTPLFFKHAAGAYVTDEDDKRYVDYVGSWGPMILGHSHPDVLDAVRNQLEHGLSYGAPTAMETEMADLVCELVPSMEMVRMVSSGTEATMSAIRLARGFTGRDSIIKFEGCYHGHSDSLLVKAGSGALTLGVPSSPGVPAAFAKHTLTVPFNDLNAVRDLLAEVGQEVACIIVEPVAGNMNCVPPAPGYLQGLRALCDEHGVVLIFDEVMTGFRVALGGAQAYYDVKPDLSTFGKIIGGGMPVGCFGGKREIMSHIAPLGPVYQAGTLSGNPLAMAAGLTTLRLISRPGFHDELSDYTRRLLEGLQQRADAAGIAFVTTQAGGMFGLYFSDASEIVTFEDVMTSDAERFKRFFHLMLEGGVYLAPSAFEAGFTSIAHGDAELKLTLDAAEKAFAALK</sequence>
<dbReference type="EC" id="5.4.3.8" evidence="1"/>
<dbReference type="EMBL" id="AE016853">
    <property type="protein sequence ID" value="AAO58229.1"/>
    <property type="molecule type" value="Genomic_DNA"/>
</dbReference>
<dbReference type="RefSeq" id="NP_794534.1">
    <property type="nucleotide sequence ID" value="NC_004578.1"/>
</dbReference>
<dbReference type="RefSeq" id="WP_007243834.1">
    <property type="nucleotide sequence ID" value="NC_004578.1"/>
</dbReference>
<dbReference type="SMR" id="Q87VY5"/>
<dbReference type="STRING" id="223283.PSPTO_4800"/>
<dbReference type="GeneID" id="1186483"/>
<dbReference type="KEGG" id="pst:PSPTO_4800"/>
<dbReference type="PATRIC" id="fig|223283.9.peg.4912"/>
<dbReference type="eggNOG" id="COG0001">
    <property type="taxonomic scope" value="Bacteria"/>
</dbReference>
<dbReference type="HOGENOM" id="CLU_016922_1_5_6"/>
<dbReference type="OrthoDB" id="9801052at2"/>
<dbReference type="PhylomeDB" id="Q87VY5"/>
<dbReference type="UniPathway" id="UPA00251">
    <property type="reaction ID" value="UER00317"/>
</dbReference>
<dbReference type="Proteomes" id="UP000002515">
    <property type="component" value="Chromosome"/>
</dbReference>
<dbReference type="GO" id="GO:0005737">
    <property type="term" value="C:cytoplasm"/>
    <property type="evidence" value="ECO:0007669"/>
    <property type="project" value="UniProtKB-SubCell"/>
</dbReference>
<dbReference type="GO" id="GO:0042286">
    <property type="term" value="F:glutamate-1-semialdehyde 2,1-aminomutase activity"/>
    <property type="evidence" value="ECO:0007669"/>
    <property type="project" value="UniProtKB-UniRule"/>
</dbReference>
<dbReference type="GO" id="GO:0030170">
    <property type="term" value="F:pyridoxal phosphate binding"/>
    <property type="evidence" value="ECO:0007669"/>
    <property type="project" value="InterPro"/>
</dbReference>
<dbReference type="GO" id="GO:0008483">
    <property type="term" value="F:transaminase activity"/>
    <property type="evidence" value="ECO:0007669"/>
    <property type="project" value="InterPro"/>
</dbReference>
<dbReference type="GO" id="GO:0006782">
    <property type="term" value="P:protoporphyrinogen IX biosynthetic process"/>
    <property type="evidence" value="ECO:0007669"/>
    <property type="project" value="UniProtKB-UniRule"/>
</dbReference>
<dbReference type="CDD" id="cd00610">
    <property type="entry name" value="OAT_like"/>
    <property type="match status" value="1"/>
</dbReference>
<dbReference type="FunFam" id="3.40.640.10:FF:000021">
    <property type="entry name" value="Glutamate-1-semialdehyde 2,1-aminomutase"/>
    <property type="match status" value="1"/>
</dbReference>
<dbReference type="Gene3D" id="3.90.1150.10">
    <property type="entry name" value="Aspartate Aminotransferase, domain 1"/>
    <property type="match status" value="1"/>
</dbReference>
<dbReference type="Gene3D" id="3.40.640.10">
    <property type="entry name" value="Type I PLP-dependent aspartate aminotransferase-like (Major domain)"/>
    <property type="match status" value="1"/>
</dbReference>
<dbReference type="HAMAP" id="MF_00375">
    <property type="entry name" value="HemL_aminotrans_3"/>
    <property type="match status" value="1"/>
</dbReference>
<dbReference type="InterPro" id="IPR004639">
    <property type="entry name" value="4pyrrol_synth_GluAld_NH2Trfase"/>
</dbReference>
<dbReference type="InterPro" id="IPR005814">
    <property type="entry name" value="Aminotrans_3"/>
</dbReference>
<dbReference type="InterPro" id="IPR049704">
    <property type="entry name" value="Aminotrans_3_PPA_site"/>
</dbReference>
<dbReference type="InterPro" id="IPR015424">
    <property type="entry name" value="PyrdxlP-dep_Trfase"/>
</dbReference>
<dbReference type="InterPro" id="IPR015421">
    <property type="entry name" value="PyrdxlP-dep_Trfase_major"/>
</dbReference>
<dbReference type="InterPro" id="IPR015422">
    <property type="entry name" value="PyrdxlP-dep_Trfase_small"/>
</dbReference>
<dbReference type="NCBIfam" id="TIGR00713">
    <property type="entry name" value="hemL"/>
    <property type="match status" value="1"/>
</dbReference>
<dbReference type="NCBIfam" id="NF000818">
    <property type="entry name" value="PRK00062.1"/>
    <property type="match status" value="1"/>
</dbReference>
<dbReference type="PANTHER" id="PTHR43713">
    <property type="entry name" value="GLUTAMATE-1-SEMIALDEHYDE 2,1-AMINOMUTASE"/>
    <property type="match status" value="1"/>
</dbReference>
<dbReference type="PANTHER" id="PTHR43713:SF3">
    <property type="entry name" value="GLUTAMATE-1-SEMIALDEHYDE 2,1-AMINOMUTASE 1, CHLOROPLASTIC-RELATED"/>
    <property type="match status" value="1"/>
</dbReference>
<dbReference type="Pfam" id="PF00202">
    <property type="entry name" value="Aminotran_3"/>
    <property type="match status" value="1"/>
</dbReference>
<dbReference type="SUPFAM" id="SSF53383">
    <property type="entry name" value="PLP-dependent transferases"/>
    <property type="match status" value="1"/>
</dbReference>
<dbReference type="PROSITE" id="PS00600">
    <property type="entry name" value="AA_TRANSFER_CLASS_3"/>
    <property type="match status" value="1"/>
</dbReference>
<comment type="catalytic activity">
    <reaction evidence="1">
        <text>(S)-4-amino-5-oxopentanoate = 5-aminolevulinate</text>
        <dbReference type="Rhea" id="RHEA:14265"/>
        <dbReference type="ChEBI" id="CHEBI:57501"/>
        <dbReference type="ChEBI" id="CHEBI:356416"/>
        <dbReference type="EC" id="5.4.3.8"/>
    </reaction>
</comment>
<comment type="cofactor">
    <cofactor evidence="1">
        <name>pyridoxal 5'-phosphate</name>
        <dbReference type="ChEBI" id="CHEBI:597326"/>
    </cofactor>
</comment>
<comment type="pathway">
    <text evidence="1">Porphyrin-containing compound metabolism; protoporphyrin-IX biosynthesis; 5-aminolevulinate from L-glutamyl-tRNA(Glu): step 2/2.</text>
</comment>
<comment type="subunit">
    <text evidence="1">Homodimer.</text>
</comment>
<comment type="subcellular location">
    <subcellularLocation>
        <location evidence="1">Cytoplasm</location>
    </subcellularLocation>
</comment>
<comment type="similarity">
    <text evidence="1">Belongs to the class-III pyridoxal-phosphate-dependent aminotransferase family. HemL subfamily.</text>
</comment>
<name>GSA_PSESM</name>
<protein>
    <recommendedName>
        <fullName evidence="1">Glutamate-1-semialdehyde 2,1-aminomutase</fullName>
        <shortName evidence="1">GSA</shortName>
        <ecNumber evidence="1">5.4.3.8</ecNumber>
    </recommendedName>
    <alternativeName>
        <fullName evidence="1">Glutamate-1-semialdehyde aminotransferase</fullName>
        <shortName evidence="1">GSA-AT</shortName>
    </alternativeName>
</protein>
<reference key="1">
    <citation type="journal article" date="2003" name="Proc. Natl. Acad. Sci. U.S.A.">
        <title>The complete genome sequence of the Arabidopsis and tomato pathogen Pseudomonas syringae pv. tomato DC3000.</title>
        <authorList>
            <person name="Buell C.R."/>
            <person name="Joardar V."/>
            <person name="Lindeberg M."/>
            <person name="Selengut J."/>
            <person name="Paulsen I.T."/>
            <person name="Gwinn M.L."/>
            <person name="Dodson R.J."/>
            <person name="DeBoy R.T."/>
            <person name="Durkin A.S."/>
            <person name="Kolonay J.F."/>
            <person name="Madupu R."/>
            <person name="Daugherty S.C."/>
            <person name="Brinkac L.M."/>
            <person name="Beanan M.J."/>
            <person name="Haft D.H."/>
            <person name="Nelson W.C."/>
            <person name="Davidsen T.M."/>
            <person name="Zafar N."/>
            <person name="Zhou L."/>
            <person name="Liu J."/>
            <person name="Yuan Q."/>
            <person name="Khouri H.M."/>
            <person name="Fedorova N.B."/>
            <person name="Tran B."/>
            <person name="Russell D."/>
            <person name="Berry K.J."/>
            <person name="Utterback T.R."/>
            <person name="Van Aken S.E."/>
            <person name="Feldblyum T.V."/>
            <person name="D'Ascenzo M."/>
            <person name="Deng W.-L."/>
            <person name="Ramos A.R."/>
            <person name="Alfano J.R."/>
            <person name="Cartinhour S."/>
            <person name="Chatterjee A.K."/>
            <person name="Delaney T.P."/>
            <person name="Lazarowitz S.G."/>
            <person name="Martin G.B."/>
            <person name="Schneider D.J."/>
            <person name="Tang X."/>
            <person name="Bender C.L."/>
            <person name="White O."/>
            <person name="Fraser C.M."/>
            <person name="Collmer A."/>
        </authorList>
    </citation>
    <scope>NUCLEOTIDE SEQUENCE [LARGE SCALE GENOMIC DNA]</scope>
    <source>
        <strain>ATCC BAA-871 / DC3000</strain>
    </source>
</reference>
<feature type="chain" id="PRO_0000120435" description="Glutamate-1-semialdehyde 2,1-aminomutase">
    <location>
        <begin position="1"/>
        <end position="427"/>
    </location>
</feature>
<feature type="modified residue" description="N6-(pyridoxal phosphate)lysine" evidence="1">
    <location>
        <position position="265"/>
    </location>
</feature>
<gene>
    <name evidence="1" type="primary">hemL</name>
    <name type="ordered locus">PSPTO_4800</name>
</gene>